<sequence>MAEDNTPLCSFCGKEKSEVKQLIAADDANICNECIELCTDLIADSDENTDDDSDIDTSWVNKKLPTPKELRAKLDEYVIGQDAAKKALAVAVYNHYKRLKVSQTLANDSKKAKIGAADAMVELAKSNILLIGPTGSGKTLLAQTLARLLDVPFAMADATTLTEAGYVGEDVENIVQKLLQASDYDVSKAEQGIIYIDEIDKISKKGDNPSITRDVSGEGVQQALLKLIEGTVAAIPPHGGRKHPQQELIQVDTSNILIIVGGAFAGLDKVIQQRTEKTGIGFNADVSSKDDSRRSSELLQQVEPEDLIKFGLIPELIGRLPVLAALTELDEDALVQILTEPKNALVKQYKYLFDMEGADITFTKEALDAIAKKAMARKTGARGLRSIVENALLETMYELPSMKNAKTVLVDEQVINEGKTPEIA</sequence>
<keyword id="KW-0067">ATP-binding</keyword>
<keyword id="KW-0143">Chaperone</keyword>
<keyword id="KW-0479">Metal-binding</keyword>
<keyword id="KW-0547">Nucleotide-binding</keyword>
<keyword id="KW-1185">Reference proteome</keyword>
<keyword id="KW-0862">Zinc</keyword>
<organism>
    <name type="scientific">Psychrobacter arcticus (strain DSM 17307 / VKM B-2377 / 273-4)</name>
    <dbReference type="NCBI Taxonomy" id="259536"/>
    <lineage>
        <taxon>Bacteria</taxon>
        <taxon>Pseudomonadati</taxon>
        <taxon>Pseudomonadota</taxon>
        <taxon>Gammaproteobacteria</taxon>
        <taxon>Moraxellales</taxon>
        <taxon>Moraxellaceae</taxon>
        <taxon>Psychrobacter</taxon>
    </lineage>
</organism>
<protein>
    <recommendedName>
        <fullName evidence="1">ATP-dependent Clp protease ATP-binding subunit ClpX</fullName>
    </recommendedName>
</protein>
<gene>
    <name evidence="1" type="primary">clpX</name>
    <name type="ordered locus">Psyc_1942</name>
</gene>
<comment type="function">
    <text evidence="1">ATP-dependent specificity component of the Clp protease. It directs the protease to specific substrates. Can perform chaperone functions in the absence of ClpP.</text>
</comment>
<comment type="subunit">
    <text evidence="1">Component of the ClpX-ClpP complex. Forms a hexameric ring that, in the presence of ATP, binds to fourteen ClpP subunits assembled into a disk-like structure with a central cavity, resembling the structure of eukaryotic proteasomes.</text>
</comment>
<comment type="similarity">
    <text evidence="1">Belongs to the ClpX chaperone family.</text>
</comment>
<evidence type="ECO:0000255" key="1">
    <source>
        <dbReference type="HAMAP-Rule" id="MF_00175"/>
    </source>
</evidence>
<evidence type="ECO:0000255" key="2">
    <source>
        <dbReference type="PROSITE-ProRule" id="PRU01250"/>
    </source>
</evidence>
<dbReference type="EMBL" id="CP000082">
    <property type="protein sequence ID" value="AAZ19790.1"/>
    <property type="molecule type" value="Genomic_DNA"/>
</dbReference>
<dbReference type="RefSeq" id="WP_011281199.1">
    <property type="nucleotide sequence ID" value="NC_007204.1"/>
</dbReference>
<dbReference type="SMR" id="Q4FQB8"/>
<dbReference type="STRING" id="259536.Psyc_1942"/>
<dbReference type="KEGG" id="par:Psyc_1942"/>
<dbReference type="eggNOG" id="COG1219">
    <property type="taxonomic scope" value="Bacteria"/>
</dbReference>
<dbReference type="HOGENOM" id="CLU_014218_8_2_6"/>
<dbReference type="OrthoDB" id="9804062at2"/>
<dbReference type="Proteomes" id="UP000000546">
    <property type="component" value="Chromosome"/>
</dbReference>
<dbReference type="GO" id="GO:0009376">
    <property type="term" value="C:HslUV protease complex"/>
    <property type="evidence" value="ECO:0007669"/>
    <property type="project" value="TreeGrafter"/>
</dbReference>
<dbReference type="GO" id="GO:0005524">
    <property type="term" value="F:ATP binding"/>
    <property type="evidence" value="ECO:0007669"/>
    <property type="project" value="UniProtKB-UniRule"/>
</dbReference>
<dbReference type="GO" id="GO:0016887">
    <property type="term" value="F:ATP hydrolysis activity"/>
    <property type="evidence" value="ECO:0007669"/>
    <property type="project" value="InterPro"/>
</dbReference>
<dbReference type="GO" id="GO:0140662">
    <property type="term" value="F:ATP-dependent protein folding chaperone"/>
    <property type="evidence" value="ECO:0007669"/>
    <property type="project" value="InterPro"/>
</dbReference>
<dbReference type="GO" id="GO:0046983">
    <property type="term" value="F:protein dimerization activity"/>
    <property type="evidence" value="ECO:0007669"/>
    <property type="project" value="InterPro"/>
</dbReference>
<dbReference type="GO" id="GO:0051082">
    <property type="term" value="F:unfolded protein binding"/>
    <property type="evidence" value="ECO:0007669"/>
    <property type="project" value="UniProtKB-UniRule"/>
</dbReference>
<dbReference type="GO" id="GO:0008270">
    <property type="term" value="F:zinc ion binding"/>
    <property type="evidence" value="ECO:0007669"/>
    <property type="project" value="InterPro"/>
</dbReference>
<dbReference type="GO" id="GO:0051301">
    <property type="term" value="P:cell division"/>
    <property type="evidence" value="ECO:0007669"/>
    <property type="project" value="TreeGrafter"/>
</dbReference>
<dbReference type="GO" id="GO:0051603">
    <property type="term" value="P:proteolysis involved in protein catabolic process"/>
    <property type="evidence" value="ECO:0007669"/>
    <property type="project" value="TreeGrafter"/>
</dbReference>
<dbReference type="CDD" id="cd19497">
    <property type="entry name" value="RecA-like_ClpX"/>
    <property type="match status" value="1"/>
</dbReference>
<dbReference type="FunFam" id="1.10.8.60:FF:000002">
    <property type="entry name" value="ATP-dependent Clp protease ATP-binding subunit ClpX"/>
    <property type="match status" value="1"/>
</dbReference>
<dbReference type="FunFam" id="3.40.50.300:FF:000005">
    <property type="entry name" value="ATP-dependent Clp protease ATP-binding subunit ClpX"/>
    <property type="match status" value="1"/>
</dbReference>
<dbReference type="Gene3D" id="1.10.8.60">
    <property type="match status" value="1"/>
</dbReference>
<dbReference type="Gene3D" id="6.20.220.10">
    <property type="entry name" value="ClpX chaperone, C4-type zinc finger domain"/>
    <property type="match status" value="1"/>
</dbReference>
<dbReference type="Gene3D" id="3.40.50.300">
    <property type="entry name" value="P-loop containing nucleotide triphosphate hydrolases"/>
    <property type="match status" value="1"/>
</dbReference>
<dbReference type="HAMAP" id="MF_00175">
    <property type="entry name" value="ClpX"/>
    <property type="match status" value="1"/>
</dbReference>
<dbReference type="InterPro" id="IPR003593">
    <property type="entry name" value="AAA+_ATPase"/>
</dbReference>
<dbReference type="InterPro" id="IPR050052">
    <property type="entry name" value="ATP-dep_Clp_protease_ClpX"/>
</dbReference>
<dbReference type="InterPro" id="IPR003959">
    <property type="entry name" value="ATPase_AAA_core"/>
</dbReference>
<dbReference type="InterPro" id="IPR019489">
    <property type="entry name" value="Clp_ATPase_C"/>
</dbReference>
<dbReference type="InterPro" id="IPR004487">
    <property type="entry name" value="Clp_protease_ATP-bd_su_ClpX"/>
</dbReference>
<dbReference type="InterPro" id="IPR046425">
    <property type="entry name" value="ClpX_bact"/>
</dbReference>
<dbReference type="InterPro" id="IPR027417">
    <property type="entry name" value="P-loop_NTPase"/>
</dbReference>
<dbReference type="InterPro" id="IPR010603">
    <property type="entry name" value="Znf_CppX_C4"/>
</dbReference>
<dbReference type="InterPro" id="IPR038366">
    <property type="entry name" value="Znf_CppX_C4_sf"/>
</dbReference>
<dbReference type="NCBIfam" id="TIGR00382">
    <property type="entry name" value="clpX"/>
    <property type="match status" value="1"/>
</dbReference>
<dbReference type="NCBIfam" id="NF003745">
    <property type="entry name" value="PRK05342.1"/>
    <property type="match status" value="1"/>
</dbReference>
<dbReference type="PANTHER" id="PTHR48102:SF7">
    <property type="entry name" value="ATP-DEPENDENT CLP PROTEASE ATP-BINDING SUBUNIT CLPX-LIKE, MITOCHONDRIAL"/>
    <property type="match status" value="1"/>
</dbReference>
<dbReference type="PANTHER" id="PTHR48102">
    <property type="entry name" value="ATP-DEPENDENT CLP PROTEASE ATP-BINDING SUBUNIT CLPX-LIKE, MITOCHONDRIAL-RELATED"/>
    <property type="match status" value="1"/>
</dbReference>
<dbReference type="Pfam" id="PF07724">
    <property type="entry name" value="AAA_2"/>
    <property type="match status" value="1"/>
</dbReference>
<dbReference type="Pfam" id="PF10431">
    <property type="entry name" value="ClpB_D2-small"/>
    <property type="match status" value="1"/>
</dbReference>
<dbReference type="Pfam" id="PF06689">
    <property type="entry name" value="zf-C4_ClpX"/>
    <property type="match status" value="1"/>
</dbReference>
<dbReference type="SMART" id="SM00382">
    <property type="entry name" value="AAA"/>
    <property type="match status" value="1"/>
</dbReference>
<dbReference type="SMART" id="SM01086">
    <property type="entry name" value="ClpB_D2-small"/>
    <property type="match status" value="1"/>
</dbReference>
<dbReference type="SMART" id="SM00994">
    <property type="entry name" value="zf-C4_ClpX"/>
    <property type="match status" value="1"/>
</dbReference>
<dbReference type="SUPFAM" id="SSF57716">
    <property type="entry name" value="Glucocorticoid receptor-like (DNA-binding domain)"/>
    <property type="match status" value="1"/>
</dbReference>
<dbReference type="SUPFAM" id="SSF52540">
    <property type="entry name" value="P-loop containing nucleoside triphosphate hydrolases"/>
    <property type="match status" value="1"/>
</dbReference>
<dbReference type="PROSITE" id="PS51902">
    <property type="entry name" value="CLPX_ZB"/>
    <property type="match status" value="1"/>
</dbReference>
<accession>Q4FQB8</accession>
<proteinExistence type="inferred from homology"/>
<reference key="1">
    <citation type="journal article" date="2010" name="Appl. Environ. Microbiol.">
        <title>The genome sequence of Psychrobacter arcticus 273-4, a psychroactive Siberian permafrost bacterium, reveals mechanisms for adaptation to low-temperature growth.</title>
        <authorList>
            <person name="Ayala-del-Rio H.L."/>
            <person name="Chain P.S."/>
            <person name="Grzymski J.J."/>
            <person name="Ponder M.A."/>
            <person name="Ivanova N."/>
            <person name="Bergholz P.W."/>
            <person name="Di Bartolo G."/>
            <person name="Hauser L."/>
            <person name="Land M."/>
            <person name="Bakermans C."/>
            <person name="Rodrigues D."/>
            <person name="Klappenbach J."/>
            <person name="Zarka D."/>
            <person name="Larimer F."/>
            <person name="Richardson P."/>
            <person name="Murray A."/>
            <person name="Thomashow M."/>
            <person name="Tiedje J.M."/>
        </authorList>
    </citation>
    <scope>NUCLEOTIDE SEQUENCE [LARGE SCALE GENOMIC DNA]</scope>
    <source>
        <strain>DSM 17307 / VKM B-2377 / 273-4</strain>
    </source>
</reference>
<name>CLPX_PSYA2</name>
<feature type="chain" id="PRO_1000071625" description="ATP-dependent Clp protease ATP-binding subunit ClpX">
    <location>
        <begin position="1"/>
        <end position="424"/>
    </location>
</feature>
<feature type="domain" description="ClpX-type ZB" evidence="2">
    <location>
        <begin position="1"/>
        <end position="50"/>
    </location>
</feature>
<feature type="binding site" evidence="2">
    <location>
        <position position="9"/>
    </location>
    <ligand>
        <name>Zn(2+)</name>
        <dbReference type="ChEBI" id="CHEBI:29105"/>
    </ligand>
</feature>
<feature type="binding site" evidence="2">
    <location>
        <position position="12"/>
    </location>
    <ligand>
        <name>Zn(2+)</name>
        <dbReference type="ChEBI" id="CHEBI:29105"/>
    </ligand>
</feature>
<feature type="binding site" evidence="2">
    <location>
        <position position="31"/>
    </location>
    <ligand>
        <name>Zn(2+)</name>
        <dbReference type="ChEBI" id="CHEBI:29105"/>
    </ligand>
</feature>
<feature type="binding site" evidence="2">
    <location>
        <position position="34"/>
    </location>
    <ligand>
        <name>Zn(2+)</name>
        <dbReference type="ChEBI" id="CHEBI:29105"/>
    </ligand>
</feature>
<feature type="binding site" evidence="1">
    <location>
        <begin position="133"/>
        <end position="140"/>
    </location>
    <ligand>
        <name>ATP</name>
        <dbReference type="ChEBI" id="CHEBI:30616"/>
    </ligand>
</feature>